<protein>
    <recommendedName>
        <fullName evidence="1">Protein Vpu</fullName>
    </recommendedName>
    <alternativeName>
        <fullName evidence="1">U ORF protein</fullName>
    </alternativeName>
    <alternativeName>
        <fullName evidence="1">Viral protein U</fullName>
    </alternativeName>
</protein>
<comment type="function">
    <text evidence="1">Enhances virion budding by targeting host CD4 and Tetherin/BST2 to proteasome degradation. Degradation of CD4 prevents any unwanted premature interactions between viral Env and its host receptor CD4 in the endoplasmic reticulum. Degradation of antiretroviral protein Tetherin/BST2 is important for virion budding, as BST2 tethers new viral particles to the host cell membrane. Mechanistically, Vpu bridges either CD4 or BST2 to BTRC, a substrate recognition subunit of the Skp1/Cullin/F-box protein E3 ubiquitin ligase, induces their ubiquitination and subsequent proteasomal degradation. The alteration of the E3 ligase specificity by Vpu seems to promote the degradation of host IKBKB, leading to NF-kappa-B down-regulation and subsequent apoptosis. Acts as a viroporin that forms an oligomeric ion channel in membranes. Modulates the host DNA repair mechanisms to promote degradation of nuclear viral cDNA in cells that are already productively infected in order to suppress immune sensing and proviral hyper-integration (superinfection). Manipulates PML-NBs and modulates SUMOylation of host BLM protein thereby enhancing its DNA-end processing activity toward viral unintegrated linear DNA. Also inhibits RAD52-mediated homologous repair of viral cDNA, preventing the generation of dead-end circular forms of single copies of the long terminal repeat and permitting sustained nucleolytic attack.</text>
</comment>
<comment type="activity regulation">
    <text evidence="1">Ion channel activity is inhibited by hexamethylene amiloride in vitro.</text>
</comment>
<comment type="subunit">
    <text evidence="1">Homopentamer. Interacts with host CD4 and BRTC; these interactions induce proteasomal degradation of CD4. Interacts with host BST2; this interaction leads to the degradation of host BST2. Interacts with host FBXW11. Interacts with host AP1M1; this interaction plays a role in the mistrafficking and subsequent degradation of host BST2. Interacts with host RANBP2; this interaction allows Vpu to down-regulate host BLM sumoylation.</text>
</comment>
<comment type="subcellular location">
    <subcellularLocation>
        <location evidence="1">Host membrane</location>
        <topology evidence="1">Single-pass type I membrane protein</topology>
    </subcellularLocation>
</comment>
<comment type="domain">
    <text evidence="1">The N-terminus and transmembrane domains are required for self-oligomerization and proper virion budding, whereas the cytoplasmic domain is required for CD4 degradation. The cytoplasmic domain is composed of 2 amphipathic alpha helix that form a U-shape.</text>
</comment>
<comment type="PTM">
    <text evidence="1">Phosphorylated by host CK2. This phosphorylation is necessary for interaction with human BTRC and degradation of CD4.</text>
</comment>
<comment type="miscellaneous">
    <text evidence="1">HIV-1 lineages are divided in three main groups, M (for Major), O (for Outlier), and N (for New, or Non-M, Non-O). The vast majority of strains found worldwide belong to the group M. Group O seems to be endemic to and largely confined to Cameroon and neighboring countries in West Central Africa, where these viruses represent a small minority of HIV-1 strains. The group N is represented by a limited number of isolates from Cameroonian persons. The group M is further subdivided in 9 clades or subtypes (A to D, F to H, J and K).</text>
</comment>
<comment type="similarity">
    <text evidence="1">Belongs to the HIV-1 VPU protein family.</text>
</comment>
<accession>Q77376</accession>
<reference key="1">
    <citation type="journal article" date="1994" name="J. Virol.">
        <title>Genomic cloning and complete sequence analysis of a highly divergent African human immunodeficiency virus isolate.</title>
        <authorList>
            <person name="Vanden Haesevelde M."/>
            <person name="Decourt J.L."/>
            <person name="De Leys R.J."/>
            <person name="Vanderborght B."/>
            <person name="van der Groen G."/>
            <person name="van Heuverswijn H."/>
            <person name="Saman E."/>
        </authorList>
    </citation>
    <scope>NUCLEOTIDE SEQUENCE [GENOMIC RNA]</scope>
</reference>
<feature type="chain" id="PRO_0000244325" description="Protein Vpu">
    <location>
        <begin position="1"/>
        <end position="85"/>
    </location>
</feature>
<feature type="topological domain" description="Extracellular" evidence="1">
    <location>
        <begin position="1"/>
        <end position="7"/>
    </location>
</feature>
<feature type="transmembrane region" description="Helical" evidence="1">
    <location>
        <begin position="8"/>
        <end position="28"/>
    </location>
</feature>
<feature type="topological domain" description="Cytoplasmic" evidence="1">
    <location>
        <begin position="29"/>
        <end position="85"/>
    </location>
</feature>
<gene>
    <name evidence="1" type="primary">vpu</name>
</gene>
<organism>
    <name type="scientific">Human immunodeficiency virus type 1 group O (isolate ANT70)</name>
    <name type="common">HIV-1</name>
    <dbReference type="NCBI Taxonomy" id="327105"/>
    <lineage>
        <taxon>Viruses</taxon>
        <taxon>Riboviria</taxon>
        <taxon>Pararnavirae</taxon>
        <taxon>Artverviricota</taxon>
        <taxon>Revtraviricetes</taxon>
        <taxon>Ortervirales</taxon>
        <taxon>Retroviridae</taxon>
        <taxon>Orthoretrovirinae</taxon>
        <taxon>Lentivirus</taxon>
        <taxon>Human immunodeficiency virus type 1</taxon>
    </lineage>
</organism>
<sequence>MHHRDLLAIIIISALLFINVILWGFILRKYLEQKEQDRKEREILERLRRIREIRDDSDYESNGEEEQEVMDLVLSHGFDNPMFEP</sequence>
<proteinExistence type="inferred from homology"/>
<keyword id="KW-0014">AIDS</keyword>
<keyword id="KW-0053">Apoptosis</keyword>
<keyword id="KW-1043">Host membrane</keyword>
<keyword id="KW-0945">Host-virus interaction</keyword>
<keyword id="KW-1090">Inhibition of host innate immune response by virus</keyword>
<keyword id="KW-1084">Inhibition of host tetherin by virus</keyword>
<keyword id="KW-0407">Ion channel</keyword>
<keyword id="KW-0406">Ion transport</keyword>
<keyword id="KW-0472">Membrane</keyword>
<keyword id="KW-0597">Phosphoprotein</keyword>
<keyword id="KW-1185">Reference proteome</keyword>
<keyword id="KW-0812">Transmembrane</keyword>
<keyword id="KW-1133">Transmembrane helix</keyword>
<keyword id="KW-0813">Transport</keyword>
<keyword id="KW-0899">Viral immunoevasion</keyword>
<dbReference type="EMBL" id="L20587">
    <property type="protein sequence ID" value="AAA99882.1"/>
    <property type="molecule type" value="Genomic_RNA"/>
</dbReference>
<dbReference type="SMR" id="Q77376"/>
<dbReference type="Proteomes" id="UP000007689">
    <property type="component" value="Segment"/>
</dbReference>
<dbReference type="GO" id="GO:0033644">
    <property type="term" value="C:host cell membrane"/>
    <property type="evidence" value="ECO:0007669"/>
    <property type="project" value="UniProtKB-SubCell"/>
</dbReference>
<dbReference type="GO" id="GO:0016020">
    <property type="term" value="C:membrane"/>
    <property type="evidence" value="ECO:0007669"/>
    <property type="project" value="UniProtKB-UniRule"/>
</dbReference>
<dbReference type="GO" id="GO:0042609">
    <property type="term" value="F:CD4 receptor binding"/>
    <property type="evidence" value="ECO:0007669"/>
    <property type="project" value="UniProtKB-UniRule"/>
</dbReference>
<dbReference type="GO" id="GO:0005261">
    <property type="term" value="F:monoatomic cation channel activity"/>
    <property type="evidence" value="ECO:0007669"/>
    <property type="project" value="UniProtKB-UniRule"/>
</dbReference>
<dbReference type="GO" id="GO:0032801">
    <property type="term" value="P:receptor catabolic process"/>
    <property type="evidence" value="ECO:0007669"/>
    <property type="project" value="UniProtKB-UniRule"/>
</dbReference>
<dbReference type="GO" id="GO:0052170">
    <property type="term" value="P:symbiont-mediated suppression of host innate immune response"/>
    <property type="evidence" value="ECO:0007669"/>
    <property type="project" value="UniProtKB-KW"/>
</dbReference>
<dbReference type="GO" id="GO:0039502">
    <property type="term" value="P:symbiont-mediated suppression of host type I interferon-mediated signaling pathway"/>
    <property type="evidence" value="ECO:0007669"/>
    <property type="project" value="UniProtKB-UniRule"/>
</dbReference>
<dbReference type="GO" id="GO:0039587">
    <property type="term" value="P:symbiont-mediated-mediated suppression of host tetherin activity"/>
    <property type="evidence" value="ECO:0007669"/>
    <property type="project" value="UniProtKB-UniRule"/>
</dbReference>
<dbReference type="GO" id="GO:0019076">
    <property type="term" value="P:viral release from host cell"/>
    <property type="evidence" value="ECO:0007669"/>
    <property type="project" value="UniProtKB-UniRule"/>
</dbReference>
<dbReference type="HAMAP" id="MF_04082">
    <property type="entry name" value="HIV_VPU"/>
    <property type="match status" value="1"/>
</dbReference>
<dbReference type="InterPro" id="IPR008187">
    <property type="entry name" value="Vpu"/>
</dbReference>
<dbReference type="Pfam" id="PF00558">
    <property type="entry name" value="Vpu"/>
    <property type="match status" value="1"/>
</dbReference>
<name>VPU_HV1AN</name>
<evidence type="ECO:0000255" key="1">
    <source>
        <dbReference type="HAMAP-Rule" id="MF_04082"/>
    </source>
</evidence>
<organismHost>
    <name type="scientific">Homo sapiens</name>
    <name type="common">Human</name>
    <dbReference type="NCBI Taxonomy" id="9606"/>
</organismHost>